<proteinExistence type="inferred from homology"/>
<evidence type="ECO:0000255" key="1">
    <source>
        <dbReference type="HAMAP-Rule" id="MF_01552"/>
    </source>
</evidence>
<reference key="1">
    <citation type="submission" date="2009-06" db="EMBL/GenBank/DDBJ databases">
        <title>Complete sequence of Desulfovibrio salexigens DSM 2638.</title>
        <authorList>
            <consortium name="US DOE Joint Genome Institute"/>
            <person name="Lucas S."/>
            <person name="Copeland A."/>
            <person name="Lapidus A."/>
            <person name="Glavina del Rio T."/>
            <person name="Tice H."/>
            <person name="Bruce D."/>
            <person name="Goodwin L."/>
            <person name="Pitluck S."/>
            <person name="Munk A.C."/>
            <person name="Brettin T."/>
            <person name="Detter J.C."/>
            <person name="Han C."/>
            <person name="Tapia R."/>
            <person name="Larimer F."/>
            <person name="Land M."/>
            <person name="Hauser L."/>
            <person name="Kyrpides N."/>
            <person name="Anderson I."/>
            <person name="Wall J.D."/>
            <person name="Arkin A.P."/>
            <person name="Dehal P."/>
            <person name="Chivian D."/>
            <person name="Giles B."/>
            <person name="Hazen T.C."/>
        </authorList>
    </citation>
    <scope>NUCLEOTIDE SEQUENCE [LARGE SCALE GENOMIC DNA]</scope>
    <source>
        <strain>ATCC 14822 / DSM 2638 / NCIMB 8403 / VKM B-1763</strain>
    </source>
</reference>
<keyword id="KW-0067">ATP-binding</keyword>
<keyword id="KW-0436">Ligase</keyword>
<keyword id="KW-0460">Magnesium</keyword>
<keyword id="KW-0464">Manganese</keyword>
<keyword id="KW-0479">Metal-binding</keyword>
<keyword id="KW-0547">Nucleotide-binding</keyword>
<keyword id="KW-0648">Protein biosynthesis</keyword>
<keyword id="KW-1185">Reference proteome</keyword>
<dbReference type="EC" id="6.3.2.-" evidence="1"/>
<dbReference type="EMBL" id="CP001649">
    <property type="protein sequence ID" value="ACS78796.1"/>
    <property type="molecule type" value="Genomic_DNA"/>
</dbReference>
<dbReference type="RefSeq" id="WP_015850615.1">
    <property type="nucleotide sequence ID" value="NC_012881.1"/>
</dbReference>
<dbReference type="SMR" id="C6BYK5"/>
<dbReference type="STRING" id="526222.Desal_0730"/>
<dbReference type="KEGG" id="dsa:Desal_0730"/>
<dbReference type="eggNOG" id="COG0189">
    <property type="taxonomic scope" value="Bacteria"/>
</dbReference>
<dbReference type="HOGENOM" id="CLU_054353_0_1_7"/>
<dbReference type="OrthoDB" id="3865600at2"/>
<dbReference type="Proteomes" id="UP000002601">
    <property type="component" value="Chromosome"/>
</dbReference>
<dbReference type="GO" id="GO:0005737">
    <property type="term" value="C:cytoplasm"/>
    <property type="evidence" value="ECO:0007669"/>
    <property type="project" value="TreeGrafter"/>
</dbReference>
<dbReference type="GO" id="GO:0005524">
    <property type="term" value="F:ATP binding"/>
    <property type="evidence" value="ECO:0007669"/>
    <property type="project" value="UniProtKB-KW"/>
</dbReference>
<dbReference type="GO" id="GO:0046872">
    <property type="term" value="F:metal ion binding"/>
    <property type="evidence" value="ECO:0007669"/>
    <property type="project" value="UniProtKB-KW"/>
</dbReference>
<dbReference type="GO" id="GO:0018169">
    <property type="term" value="F:ribosomal S6-glutamic acid ligase activity"/>
    <property type="evidence" value="ECO:0007669"/>
    <property type="project" value="TreeGrafter"/>
</dbReference>
<dbReference type="GO" id="GO:0036211">
    <property type="term" value="P:protein modification process"/>
    <property type="evidence" value="ECO:0007669"/>
    <property type="project" value="InterPro"/>
</dbReference>
<dbReference type="GO" id="GO:0009432">
    <property type="term" value="P:SOS response"/>
    <property type="evidence" value="ECO:0007669"/>
    <property type="project" value="TreeGrafter"/>
</dbReference>
<dbReference type="GO" id="GO:0006412">
    <property type="term" value="P:translation"/>
    <property type="evidence" value="ECO:0007669"/>
    <property type="project" value="UniProtKB-KW"/>
</dbReference>
<dbReference type="FunFam" id="3.30.470.20:FF:000058">
    <property type="entry name" value="Alpha-aminoadipate--LysW ligase LysX protein"/>
    <property type="match status" value="1"/>
</dbReference>
<dbReference type="FunFam" id="3.40.50.20:FF:000004">
    <property type="entry name" value="Probable alpha-L-glutamate ligase"/>
    <property type="match status" value="1"/>
</dbReference>
<dbReference type="FunFam" id="3.30.1490.20:FF:000005">
    <property type="entry name" value="Probable alpha-L-glutamate ligase 1"/>
    <property type="match status" value="1"/>
</dbReference>
<dbReference type="Gene3D" id="3.40.50.20">
    <property type="match status" value="1"/>
</dbReference>
<dbReference type="Gene3D" id="3.30.1490.20">
    <property type="entry name" value="ATP-grasp fold, A domain"/>
    <property type="match status" value="1"/>
</dbReference>
<dbReference type="Gene3D" id="3.30.470.20">
    <property type="entry name" value="ATP-grasp fold, B domain"/>
    <property type="match status" value="1"/>
</dbReference>
<dbReference type="HAMAP" id="MF_01552">
    <property type="entry name" value="RimK"/>
    <property type="match status" value="1"/>
</dbReference>
<dbReference type="InterPro" id="IPR011761">
    <property type="entry name" value="ATP-grasp"/>
</dbReference>
<dbReference type="InterPro" id="IPR013651">
    <property type="entry name" value="ATP-grasp_RimK-type"/>
</dbReference>
<dbReference type="InterPro" id="IPR013815">
    <property type="entry name" value="ATP_grasp_subdomain_1"/>
</dbReference>
<dbReference type="InterPro" id="IPR023533">
    <property type="entry name" value="RimK"/>
</dbReference>
<dbReference type="InterPro" id="IPR041107">
    <property type="entry name" value="Rimk_N"/>
</dbReference>
<dbReference type="InterPro" id="IPR004666">
    <property type="entry name" value="Rp_bS6_RimK/Lys_biosynth_LsyX"/>
</dbReference>
<dbReference type="NCBIfam" id="NF007764">
    <property type="entry name" value="PRK10446.1"/>
    <property type="match status" value="1"/>
</dbReference>
<dbReference type="NCBIfam" id="TIGR00768">
    <property type="entry name" value="rimK_fam"/>
    <property type="match status" value="1"/>
</dbReference>
<dbReference type="PANTHER" id="PTHR21621:SF7">
    <property type="entry name" value="RIBOSOMAL PROTEIN BS6--L-GLUTAMATE LIGASE"/>
    <property type="match status" value="1"/>
</dbReference>
<dbReference type="PANTHER" id="PTHR21621">
    <property type="entry name" value="RIBOSOMAL PROTEIN S6 MODIFICATION PROTEIN"/>
    <property type="match status" value="1"/>
</dbReference>
<dbReference type="Pfam" id="PF08443">
    <property type="entry name" value="RimK"/>
    <property type="match status" value="1"/>
</dbReference>
<dbReference type="Pfam" id="PF18030">
    <property type="entry name" value="Rimk_N"/>
    <property type="match status" value="1"/>
</dbReference>
<dbReference type="SUPFAM" id="SSF56059">
    <property type="entry name" value="Glutathione synthetase ATP-binding domain-like"/>
    <property type="match status" value="1"/>
</dbReference>
<dbReference type="PROSITE" id="PS50975">
    <property type="entry name" value="ATP_GRASP"/>
    <property type="match status" value="1"/>
</dbReference>
<comment type="cofactor">
    <cofactor evidence="1">
        <name>Mg(2+)</name>
        <dbReference type="ChEBI" id="CHEBI:18420"/>
    </cofactor>
    <cofactor evidence="1">
        <name>Mn(2+)</name>
        <dbReference type="ChEBI" id="CHEBI:29035"/>
    </cofactor>
    <text evidence="1">Binds 2 magnesium or manganese ions per subunit.</text>
</comment>
<comment type="similarity">
    <text evidence="1">Belongs to the RimK family.</text>
</comment>
<accession>C6BYK5</accession>
<sequence length="301" mass="32553">MKIGILSRKRELYSTNSLVEACNARGHEVRVINPLRCYMNITSHNPSILYKGEKLEGFDAIIPRIGASITFYGCAVVRQFEMMGVYCVNESVAITRSRDKLRSLQLLARKGIGLPVTAFAHSTQYTEDLIDIVGGAPLVIKLLEGTQGKGVVLAETRNTAASIIEAFKGLEANILVQEFISEASGSDIRCLVVGGKVIASMKRQGREGDFRSNLHQGGSATQVRITPEERSTAVRSAKIMGLGFCGVDILRSNHGPVVMEVNSSPGLEGIEKTTDIDVAGQLIDYIEKNAQPGKTKTKGKG</sequence>
<feature type="chain" id="PRO_1000215474" description="Probable alpha-L-glutamate ligase">
    <location>
        <begin position="1"/>
        <end position="301"/>
    </location>
</feature>
<feature type="domain" description="ATP-grasp" evidence="1">
    <location>
        <begin position="104"/>
        <end position="287"/>
    </location>
</feature>
<feature type="binding site" evidence="1">
    <location>
        <position position="141"/>
    </location>
    <ligand>
        <name>ATP</name>
        <dbReference type="ChEBI" id="CHEBI:30616"/>
    </ligand>
</feature>
<feature type="binding site" evidence="1">
    <location>
        <begin position="178"/>
        <end position="179"/>
    </location>
    <ligand>
        <name>ATP</name>
        <dbReference type="ChEBI" id="CHEBI:30616"/>
    </ligand>
</feature>
<feature type="binding site" evidence="1">
    <location>
        <position position="187"/>
    </location>
    <ligand>
        <name>ATP</name>
        <dbReference type="ChEBI" id="CHEBI:30616"/>
    </ligand>
</feature>
<feature type="binding site" evidence="1">
    <location>
        <begin position="211"/>
        <end position="213"/>
    </location>
    <ligand>
        <name>ATP</name>
        <dbReference type="ChEBI" id="CHEBI:30616"/>
    </ligand>
</feature>
<feature type="binding site" evidence="1">
    <location>
        <position position="248"/>
    </location>
    <ligand>
        <name>Mg(2+)</name>
        <dbReference type="ChEBI" id="CHEBI:18420"/>
        <label>1</label>
    </ligand>
</feature>
<feature type="binding site" evidence="1">
    <location>
        <position position="248"/>
    </location>
    <ligand>
        <name>Mn(2+)</name>
        <dbReference type="ChEBI" id="CHEBI:29035"/>
        <label>1</label>
    </ligand>
</feature>
<feature type="binding site" evidence="1">
    <location>
        <position position="260"/>
    </location>
    <ligand>
        <name>Mg(2+)</name>
        <dbReference type="ChEBI" id="CHEBI:18420"/>
        <label>1</label>
    </ligand>
</feature>
<feature type="binding site" evidence="1">
    <location>
        <position position="260"/>
    </location>
    <ligand>
        <name>Mg(2+)</name>
        <dbReference type="ChEBI" id="CHEBI:18420"/>
        <label>2</label>
    </ligand>
</feature>
<feature type="binding site" evidence="1">
    <location>
        <position position="260"/>
    </location>
    <ligand>
        <name>Mn(2+)</name>
        <dbReference type="ChEBI" id="CHEBI:29035"/>
        <label>1</label>
    </ligand>
</feature>
<feature type="binding site" evidence="1">
    <location>
        <position position="260"/>
    </location>
    <ligand>
        <name>Mn(2+)</name>
        <dbReference type="ChEBI" id="CHEBI:29035"/>
        <label>2</label>
    </ligand>
</feature>
<feature type="binding site" evidence="1">
    <location>
        <position position="262"/>
    </location>
    <ligand>
        <name>Mg(2+)</name>
        <dbReference type="ChEBI" id="CHEBI:18420"/>
        <label>2</label>
    </ligand>
</feature>
<feature type="binding site" evidence="1">
    <location>
        <position position="262"/>
    </location>
    <ligand>
        <name>Mn(2+)</name>
        <dbReference type="ChEBI" id="CHEBI:29035"/>
        <label>2</label>
    </ligand>
</feature>
<name>RIMK_MARSD</name>
<organism>
    <name type="scientific">Maridesulfovibrio salexigens (strain ATCC 14822 / DSM 2638 / NCIMB 8403 / VKM B-1763)</name>
    <name type="common">Desulfovibrio salexigens</name>
    <dbReference type="NCBI Taxonomy" id="526222"/>
    <lineage>
        <taxon>Bacteria</taxon>
        <taxon>Pseudomonadati</taxon>
        <taxon>Thermodesulfobacteriota</taxon>
        <taxon>Desulfovibrionia</taxon>
        <taxon>Desulfovibrionales</taxon>
        <taxon>Desulfovibrionaceae</taxon>
        <taxon>Maridesulfovibrio</taxon>
    </lineage>
</organism>
<gene>
    <name evidence="1" type="primary">rimK</name>
    <name type="ordered locus">Desal_0730</name>
</gene>
<protein>
    <recommendedName>
        <fullName evidence="1">Probable alpha-L-glutamate ligase</fullName>
        <ecNumber evidence="1">6.3.2.-</ecNumber>
    </recommendedName>
</protein>